<keyword id="KW-0067">ATP-binding</keyword>
<keyword id="KW-0072">Autophagy</keyword>
<keyword id="KW-0963">Cytoplasm</keyword>
<keyword id="KW-0418">Kinase</keyword>
<keyword id="KW-0547">Nucleotide-binding</keyword>
<keyword id="KW-1185">Reference proteome</keyword>
<keyword id="KW-0677">Repeat</keyword>
<keyword id="KW-0723">Serine/threonine-protein kinase</keyword>
<keyword id="KW-0808">Transferase</keyword>
<proteinExistence type="evidence at transcript level"/>
<organism>
    <name type="scientific">Xenopus laevis</name>
    <name type="common">African clawed frog</name>
    <dbReference type="NCBI Taxonomy" id="8355"/>
    <lineage>
        <taxon>Eukaryota</taxon>
        <taxon>Metazoa</taxon>
        <taxon>Chordata</taxon>
        <taxon>Craniata</taxon>
        <taxon>Vertebrata</taxon>
        <taxon>Euteleostomi</taxon>
        <taxon>Amphibia</taxon>
        <taxon>Batrachia</taxon>
        <taxon>Anura</taxon>
        <taxon>Pipoidea</taxon>
        <taxon>Pipidae</taxon>
        <taxon>Xenopodinae</taxon>
        <taxon>Xenopus</taxon>
        <taxon>Xenopus</taxon>
    </lineage>
</organism>
<gene>
    <name type="primary">ulk3</name>
</gene>
<name>ULK3_XENLA</name>
<evidence type="ECO:0000250" key="1"/>
<evidence type="ECO:0000255" key="2">
    <source>
        <dbReference type="PROSITE-ProRule" id="PRU00159"/>
    </source>
</evidence>
<evidence type="ECO:0000255" key="3">
    <source>
        <dbReference type="PROSITE-ProRule" id="PRU10027"/>
    </source>
</evidence>
<sequence length="468" mass="53127">MAAGWAPPRLEDFILTEKLGSGSYATVYKAYRKRNAREVVAIKCVSKKSLNKAAVENLLTEIEILKTVHHPHILELKDFQWDQDYIFLITEYCAGGDLSRFIRTRRILPERIVQVFLQQLASALKFLHEKNISHLDLKPQNILLSRLDRPHLKLADFGFAQHMSSEDAPQALRGSPLYMAPEMVCSKHYDARVDLWSVGVILYEALFGKAPFASKSFSELEEKILSHKTIELPTRPRLSPECRDLLQQLLQRDPDKRISFIEFFAHLFVDLEHMPSAETLEKATRLVVEAVEKDSAGEHSAALTLYCKALEYFIPALHYESDAKRKEAMRSKVCQYISRAEELKVLVSSSNKTLLMQGISGRELLKEMAQDKPRLFSALEVASAAVAKDEEGCACDALDLYQQSLGELLLMLSAESPGRRRELLHAEIQTLMGRAEFLKEQMKTSQWKSESLGQEVLSESVRNSCSLQ</sequence>
<comment type="function">
    <text evidence="1">Serine/threonine protein kinase that acts as a regulator of Sonic hedgehog (SHH) signaling and autophagy.</text>
</comment>
<comment type="catalytic activity">
    <reaction>
        <text>L-seryl-[protein] + ATP = O-phospho-L-seryl-[protein] + ADP + H(+)</text>
        <dbReference type="Rhea" id="RHEA:17989"/>
        <dbReference type="Rhea" id="RHEA-COMP:9863"/>
        <dbReference type="Rhea" id="RHEA-COMP:11604"/>
        <dbReference type="ChEBI" id="CHEBI:15378"/>
        <dbReference type="ChEBI" id="CHEBI:29999"/>
        <dbReference type="ChEBI" id="CHEBI:30616"/>
        <dbReference type="ChEBI" id="CHEBI:83421"/>
        <dbReference type="ChEBI" id="CHEBI:456216"/>
        <dbReference type="EC" id="2.7.11.1"/>
    </reaction>
</comment>
<comment type="catalytic activity">
    <reaction>
        <text>L-threonyl-[protein] + ATP = O-phospho-L-threonyl-[protein] + ADP + H(+)</text>
        <dbReference type="Rhea" id="RHEA:46608"/>
        <dbReference type="Rhea" id="RHEA-COMP:11060"/>
        <dbReference type="Rhea" id="RHEA-COMP:11605"/>
        <dbReference type="ChEBI" id="CHEBI:15378"/>
        <dbReference type="ChEBI" id="CHEBI:30013"/>
        <dbReference type="ChEBI" id="CHEBI:30616"/>
        <dbReference type="ChEBI" id="CHEBI:61977"/>
        <dbReference type="ChEBI" id="CHEBI:456216"/>
        <dbReference type="EC" id="2.7.11.1"/>
    </reaction>
</comment>
<comment type="subcellular location">
    <subcellularLocation>
        <location evidence="1">Cytoplasm</location>
    </subcellularLocation>
</comment>
<comment type="similarity">
    <text evidence="2">Belongs to the protein kinase superfamily. Ser/Thr protein kinase family. APG1/unc-51/ULK1 subfamily.</text>
</comment>
<accession>Q4V7Q6</accession>
<dbReference type="EC" id="2.7.11.1"/>
<dbReference type="EMBL" id="BC097772">
    <property type="protein sequence ID" value="AAH97772.1"/>
    <property type="molecule type" value="mRNA"/>
</dbReference>
<dbReference type="RefSeq" id="NP_001089515.1">
    <property type="nucleotide sequence ID" value="NM_001096046.1"/>
</dbReference>
<dbReference type="SMR" id="Q4V7Q6"/>
<dbReference type="DNASU" id="734568"/>
<dbReference type="GeneID" id="734568"/>
<dbReference type="KEGG" id="xla:734568"/>
<dbReference type="AGR" id="Xenbase:XB-GENE-5958954"/>
<dbReference type="CTD" id="734568"/>
<dbReference type="Xenbase" id="XB-GENE-5958954">
    <property type="gene designation" value="ulk3.L"/>
</dbReference>
<dbReference type="OrthoDB" id="346907at2759"/>
<dbReference type="Proteomes" id="UP000186698">
    <property type="component" value="Chromosome 3L"/>
</dbReference>
<dbReference type="Bgee" id="734568">
    <property type="expression patterns" value="Expressed in oocyte and 19 other cell types or tissues"/>
</dbReference>
<dbReference type="GO" id="GO:0005776">
    <property type="term" value="C:autophagosome"/>
    <property type="evidence" value="ECO:0000318"/>
    <property type="project" value="GO_Central"/>
</dbReference>
<dbReference type="GO" id="GO:0005737">
    <property type="term" value="C:cytoplasm"/>
    <property type="evidence" value="ECO:0000250"/>
    <property type="project" value="UniProtKB"/>
</dbReference>
<dbReference type="GO" id="GO:0005829">
    <property type="term" value="C:cytosol"/>
    <property type="evidence" value="ECO:0000318"/>
    <property type="project" value="GO_Central"/>
</dbReference>
<dbReference type="GO" id="GO:0000407">
    <property type="term" value="C:phagophore assembly site"/>
    <property type="evidence" value="ECO:0000318"/>
    <property type="project" value="GO_Central"/>
</dbReference>
<dbReference type="GO" id="GO:0034045">
    <property type="term" value="C:phagophore assembly site membrane"/>
    <property type="evidence" value="ECO:0000318"/>
    <property type="project" value="GO_Central"/>
</dbReference>
<dbReference type="GO" id="GO:0005524">
    <property type="term" value="F:ATP binding"/>
    <property type="evidence" value="ECO:0007669"/>
    <property type="project" value="UniProtKB-KW"/>
</dbReference>
<dbReference type="GO" id="GO:0106310">
    <property type="term" value="F:protein serine kinase activity"/>
    <property type="evidence" value="ECO:0007669"/>
    <property type="project" value="RHEA"/>
</dbReference>
<dbReference type="GO" id="GO:0004674">
    <property type="term" value="F:protein serine/threonine kinase activity"/>
    <property type="evidence" value="ECO:0000250"/>
    <property type="project" value="UniProtKB"/>
</dbReference>
<dbReference type="GO" id="GO:0000045">
    <property type="term" value="P:autophagosome assembly"/>
    <property type="evidence" value="ECO:0000318"/>
    <property type="project" value="GO_Central"/>
</dbReference>
<dbReference type="GO" id="GO:0000423">
    <property type="term" value="P:mitophagy"/>
    <property type="evidence" value="ECO:0000318"/>
    <property type="project" value="GO_Central"/>
</dbReference>
<dbReference type="GO" id="GO:0045879">
    <property type="term" value="P:negative regulation of smoothened signaling pathway"/>
    <property type="evidence" value="ECO:0000250"/>
    <property type="project" value="UniProtKB"/>
</dbReference>
<dbReference type="GO" id="GO:0034727">
    <property type="term" value="P:piecemeal microautophagy of the nucleus"/>
    <property type="evidence" value="ECO:0000318"/>
    <property type="project" value="GO_Central"/>
</dbReference>
<dbReference type="GO" id="GO:0045880">
    <property type="term" value="P:positive regulation of smoothened signaling pathway"/>
    <property type="evidence" value="ECO:0000250"/>
    <property type="project" value="UniProtKB"/>
</dbReference>
<dbReference type="GO" id="GO:0046777">
    <property type="term" value="P:protein autophosphorylation"/>
    <property type="evidence" value="ECO:0000250"/>
    <property type="project" value="UniProtKB"/>
</dbReference>
<dbReference type="GO" id="GO:0010506">
    <property type="term" value="P:regulation of autophagy"/>
    <property type="evidence" value="ECO:0000318"/>
    <property type="project" value="GO_Central"/>
</dbReference>
<dbReference type="GO" id="GO:0042594">
    <property type="term" value="P:response to starvation"/>
    <property type="evidence" value="ECO:0000318"/>
    <property type="project" value="GO_Central"/>
</dbReference>
<dbReference type="GO" id="GO:0061709">
    <property type="term" value="P:reticulophagy"/>
    <property type="evidence" value="ECO:0000318"/>
    <property type="project" value="GO_Central"/>
</dbReference>
<dbReference type="CDD" id="cd14121">
    <property type="entry name" value="STKc_ULK3"/>
    <property type="match status" value="1"/>
</dbReference>
<dbReference type="FunFam" id="1.10.510.10:FF:000241">
    <property type="entry name" value="Putative serine/threonine-protein kinase ULK3"/>
    <property type="match status" value="1"/>
</dbReference>
<dbReference type="FunFam" id="3.30.200.20:FF:000238">
    <property type="entry name" value="Putative serine/threonine-protein kinase ULK3"/>
    <property type="match status" value="1"/>
</dbReference>
<dbReference type="FunFam" id="1.20.58.80:FF:000008">
    <property type="entry name" value="serine/threonine-protein kinase ULK3 isoform X1"/>
    <property type="match status" value="1"/>
</dbReference>
<dbReference type="FunFam" id="1.20.58.80:FF:000010">
    <property type="entry name" value="serine/threonine-protein kinase ULK3 isoform X1"/>
    <property type="match status" value="1"/>
</dbReference>
<dbReference type="Gene3D" id="3.30.200.20">
    <property type="entry name" value="Phosphorylase Kinase, domain 1"/>
    <property type="match status" value="1"/>
</dbReference>
<dbReference type="Gene3D" id="1.20.58.80">
    <property type="entry name" value="Phosphotransferase system, lactose/cellobiose-type IIA subunit"/>
    <property type="match status" value="2"/>
</dbReference>
<dbReference type="Gene3D" id="1.10.510.10">
    <property type="entry name" value="Transferase(Phosphotransferase) domain 1"/>
    <property type="match status" value="1"/>
</dbReference>
<dbReference type="InterPro" id="IPR045269">
    <property type="entry name" value="Atg1-like"/>
</dbReference>
<dbReference type="InterPro" id="IPR011009">
    <property type="entry name" value="Kinase-like_dom_sf"/>
</dbReference>
<dbReference type="InterPro" id="IPR007330">
    <property type="entry name" value="MIT_dom"/>
</dbReference>
<dbReference type="InterPro" id="IPR036181">
    <property type="entry name" value="MIT_dom_sf"/>
</dbReference>
<dbReference type="InterPro" id="IPR000719">
    <property type="entry name" value="Prot_kinase_dom"/>
</dbReference>
<dbReference type="InterPro" id="IPR017441">
    <property type="entry name" value="Protein_kinase_ATP_BS"/>
</dbReference>
<dbReference type="InterPro" id="IPR008271">
    <property type="entry name" value="Ser/Thr_kinase_AS"/>
</dbReference>
<dbReference type="PANTHER" id="PTHR24348">
    <property type="entry name" value="SERINE/THREONINE-PROTEIN KINASE UNC-51-RELATED"/>
    <property type="match status" value="1"/>
</dbReference>
<dbReference type="PANTHER" id="PTHR24348:SF65">
    <property type="entry name" value="SERINE_THREONINE-PROTEIN KINASE ULK3"/>
    <property type="match status" value="1"/>
</dbReference>
<dbReference type="Pfam" id="PF04212">
    <property type="entry name" value="MIT"/>
    <property type="match status" value="2"/>
</dbReference>
<dbReference type="Pfam" id="PF00069">
    <property type="entry name" value="Pkinase"/>
    <property type="match status" value="1"/>
</dbReference>
<dbReference type="SMART" id="SM00745">
    <property type="entry name" value="MIT"/>
    <property type="match status" value="2"/>
</dbReference>
<dbReference type="SMART" id="SM00220">
    <property type="entry name" value="S_TKc"/>
    <property type="match status" value="1"/>
</dbReference>
<dbReference type="SUPFAM" id="SSF116846">
    <property type="entry name" value="MIT domain"/>
    <property type="match status" value="2"/>
</dbReference>
<dbReference type="SUPFAM" id="SSF56112">
    <property type="entry name" value="Protein kinase-like (PK-like)"/>
    <property type="match status" value="1"/>
</dbReference>
<dbReference type="PROSITE" id="PS00107">
    <property type="entry name" value="PROTEIN_KINASE_ATP"/>
    <property type="match status" value="1"/>
</dbReference>
<dbReference type="PROSITE" id="PS50011">
    <property type="entry name" value="PROTEIN_KINASE_DOM"/>
    <property type="match status" value="1"/>
</dbReference>
<dbReference type="PROSITE" id="PS00108">
    <property type="entry name" value="PROTEIN_KINASE_ST"/>
    <property type="match status" value="1"/>
</dbReference>
<feature type="chain" id="PRO_0000250153" description="Serine/threonine-protein kinase ULK3">
    <location>
        <begin position="1"/>
        <end position="468"/>
    </location>
</feature>
<feature type="domain" description="Protein kinase" evidence="2">
    <location>
        <begin position="13"/>
        <end position="269"/>
    </location>
</feature>
<feature type="domain" description="MIT 1">
    <location>
        <begin position="279"/>
        <end position="347"/>
    </location>
</feature>
<feature type="domain" description="MIT 2">
    <location>
        <begin position="374"/>
        <end position="442"/>
    </location>
</feature>
<feature type="active site" description="Proton acceptor" evidence="2 3">
    <location>
        <position position="136"/>
    </location>
</feature>
<feature type="binding site" evidence="2">
    <location>
        <begin position="19"/>
        <end position="27"/>
    </location>
    <ligand>
        <name>ATP</name>
        <dbReference type="ChEBI" id="CHEBI:30616"/>
    </ligand>
</feature>
<feature type="binding site" evidence="2">
    <location>
        <position position="43"/>
    </location>
    <ligand>
        <name>ATP</name>
        <dbReference type="ChEBI" id="CHEBI:30616"/>
    </ligand>
</feature>
<protein>
    <recommendedName>
        <fullName>Serine/threonine-protein kinase ULK3</fullName>
        <ecNumber>2.7.11.1</ecNumber>
    </recommendedName>
    <alternativeName>
        <fullName>Unc-51-like kinase 3</fullName>
    </alternativeName>
</protein>
<reference key="1">
    <citation type="submission" date="2005-06" db="EMBL/GenBank/DDBJ databases">
        <authorList>
            <consortium name="NIH - Xenopus Gene Collection (XGC) project"/>
        </authorList>
    </citation>
    <scope>NUCLEOTIDE SEQUENCE [LARGE SCALE MRNA]</scope>
    <source>
        <tissue>Egg</tissue>
    </source>
</reference>